<name>ANFC2_ORYLA</name>
<comment type="function">
    <text evidence="2 6 7">Exhibits natriuretic and vasodepressant activity. Has cGMP-stimulating activity. May help to regulate body fluid homeostasis in a variety of aquatic environments.</text>
</comment>
<comment type="subcellular location">
    <subcellularLocation>
        <location>Secreted</location>
    </subcellularLocation>
</comment>
<comment type="tissue specificity">
    <text evidence="6 8">Brain and spinal cord.</text>
</comment>
<comment type="similarity">
    <text evidence="4">Belongs to the natriuretic peptide family.</text>
</comment>
<accession>Q8AYR5</accession>
<reference evidence="8 9" key="1">
    <citation type="journal article" date="2003" name="Proc. Natl. Acad. Sci. U.S.A.">
        <title>Four functionally distinct C-type natriuretic peptides found in fish reveal evolutionary history of the natriuretic peptide system.</title>
        <authorList>
            <person name="Inoue K."/>
            <person name="Naruse K."/>
            <person name="Yamagami S."/>
            <person name="Mitani H."/>
            <person name="Suzuki N."/>
            <person name="Takei Y."/>
        </authorList>
    </citation>
    <scope>NUCLEOTIDE SEQUENCE [MRNA]</scope>
    <scope>FUNCTION</scope>
    <scope>TISSUE SPECIFICITY</scope>
    <scope>SYNTHESIS</scope>
    <source>
        <tissue evidence="6">Brain</tissue>
    </source>
</reference>
<gene>
    <name evidence="9" type="primary">cnp-2</name>
</gene>
<evidence type="ECO:0000250" key="1"/>
<evidence type="ECO:0000250" key="2">
    <source>
        <dbReference type="UniProtKB" id="P18145"/>
    </source>
</evidence>
<evidence type="ECO:0000255" key="3"/>
<evidence type="ECO:0000255" key="4">
    <source>
        <dbReference type="RuleBase" id="RU003686"/>
    </source>
</evidence>
<evidence type="ECO:0000256" key="5">
    <source>
        <dbReference type="SAM" id="MobiDB-lite"/>
    </source>
</evidence>
<evidence type="ECO:0000269" key="6">
    <source>
    </source>
</evidence>
<evidence type="ECO:0000303" key="7">
    <source>
    </source>
</evidence>
<evidence type="ECO:0000305" key="8"/>
<evidence type="ECO:0000312" key="9">
    <source>
        <dbReference type="EMBL" id="BAC15761.1"/>
    </source>
</evidence>
<keyword id="KW-0165">Cleavage on pair of basic residues</keyword>
<keyword id="KW-1015">Disulfide bond</keyword>
<keyword id="KW-0372">Hormone</keyword>
<keyword id="KW-1185">Reference proteome</keyword>
<keyword id="KW-0964">Secreted</keyword>
<keyword id="KW-0732">Signal</keyword>
<keyword id="KW-0838">Vasoactive</keyword>
<organism>
    <name type="scientific">Oryzias latipes</name>
    <name type="common">Japanese rice fish</name>
    <name type="synonym">Japanese killifish</name>
    <dbReference type="NCBI Taxonomy" id="8090"/>
    <lineage>
        <taxon>Eukaryota</taxon>
        <taxon>Metazoa</taxon>
        <taxon>Chordata</taxon>
        <taxon>Craniata</taxon>
        <taxon>Vertebrata</taxon>
        <taxon>Euteleostomi</taxon>
        <taxon>Actinopterygii</taxon>
        <taxon>Neopterygii</taxon>
        <taxon>Teleostei</taxon>
        <taxon>Neoteleostei</taxon>
        <taxon>Acanthomorphata</taxon>
        <taxon>Ovalentaria</taxon>
        <taxon>Atherinomorphae</taxon>
        <taxon>Beloniformes</taxon>
        <taxon>Adrianichthyidae</taxon>
        <taxon>Oryziinae</taxon>
        <taxon>Oryzias</taxon>
    </lineage>
</organism>
<protein>
    <recommendedName>
        <fullName>C-type natriuretic peptide 2</fullName>
    </recommendedName>
</protein>
<sequence>MAVCSSSSLILLTVFLSVAVETRPSSDRDEEQVLKSLFGPHLTSLILAPPTSNDSTEGSSGSPEPPTPSEAPVLIHGDRGTASQILRSFLRQREKTRRWGRKPMVAGGGCFGMKMDRIGSISGLGC</sequence>
<proteinExistence type="evidence at transcript level"/>
<feature type="signal peptide" evidence="3">
    <location>
        <begin position="1"/>
        <end position="22"/>
    </location>
</feature>
<feature type="propeptide" id="PRO_0000001595" evidence="1">
    <location>
        <begin position="23"/>
        <end position="102"/>
    </location>
</feature>
<feature type="peptide" id="PRO_0000001596" description="C-type natriuretic peptide 2">
    <location>
        <begin position="103"/>
        <end position="126"/>
    </location>
</feature>
<feature type="region of interest" description="Disordered" evidence="5">
    <location>
        <begin position="44"/>
        <end position="80"/>
    </location>
</feature>
<feature type="disulfide bond" evidence="2">
    <location>
        <begin position="110"/>
        <end position="126"/>
    </location>
</feature>
<dbReference type="EMBL" id="AB081456">
    <property type="protein sequence ID" value="BAC15761.1"/>
    <property type="molecule type" value="mRNA"/>
</dbReference>
<dbReference type="FunCoup" id="Q8AYR5">
    <property type="interactions" value="4"/>
</dbReference>
<dbReference type="CTD" id="4879"/>
<dbReference type="eggNOG" id="ENOG502SH05">
    <property type="taxonomic scope" value="Eukaryota"/>
</dbReference>
<dbReference type="HOGENOM" id="CLU_2048903_0_0_1"/>
<dbReference type="InParanoid" id="Q8AYR5"/>
<dbReference type="OMA" id="CFGMKID"/>
<dbReference type="TreeFam" id="TF106305"/>
<dbReference type="Proteomes" id="UP000001038">
    <property type="component" value="Unplaced"/>
</dbReference>
<dbReference type="Proteomes" id="UP000265180">
    <property type="component" value="Chromosome 9"/>
</dbReference>
<dbReference type="Proteomes" id="UP000265200">
    <property type="component" value="Chromosome 9"/>
</dbReference>
<dbReference type="GO" id="GO:0005576">
    <property type="term" value="C:extracellular region"/>
    <property type="evidence" value="ECO:0007669"/>
    <property type="project" value="UniProtKB-SubCell"/>
</dbReference>
<dbReference type="GO" id="GO:0005179">
    <property type="term" value="F:hormone activity"/>
    <property type="evidence" value="ECO:0000318"/>
    <property type="project" value="GO_Central"/>
</dbReference>
<dbReference type="GO" id="GO:0051427">
    <property type="term" value="F:hormone receptor binding"/>
    <property type="evidence" value="ECO:0000318"/>
    <property type="project" value="GO_Central"/>
</dbReference>
<dbReference type="GO" id="GO:0097746">
    <property type="term" value="P:blood vessel diameter maintenance"/>
    <property type="evidence" value="ECO:0007669"/>
    <property type="project" value="UniProtKB-KW"/>
</dbReference>
<dbReference type="GO" id="GO:0006182">
    <property type="term" value="P:cGMP biosynthetic process"/>
    <property type="evidence" value="ECO:0000318"/>
    <property type="project" value="GO_Central"/>
</dbReference>
<dbReference type="GO" id="GO:0007168">
    <property type="term" value="P:receptor guanylyl cyclase signaling pathway"/>
    <property type="evidence" value="ECO:0000318"/>
    <property type="project" value="GO_Central"/>
</dbReference>
<dbReference type="InterPro" id="IPR000663">
    <property type="entry name" value="Natr_peptide"/>
</dbReference>
<dbReference type="InterPro" id="IPR030480">
    <property type="entry name" value="Natr_peptide_CS"/>
</dbReference>
<dbReference type="InterPro" id="IPR002408">
    <property type="entry name" value="Natriuretic_peptide_brain"/>
</dbReference>
<dbReference type="PANTHER" id="PTHR12167">
    <property type="entry name" value="C-TYPE NATRIURETIC PEPTIDE"/>
    <property type="match status" value="1"/>
</dbReference>
<dbReference type="PANTHER" id="PTHR12167:SF6">
    <property type="entry name" value="C-TYPE NATRIURETIC PEPTIDE 2-LIKE"/>
    <property type="match status" value="1"/>
</dbReference>
<dbReference type="Pfam" id="PF00212">
    <property type="entry name" value="ANP"/>
    <property type="match status" value="1"/>
</dbReference>
<dbReference type="PRINTS" id="PR00712">
    <property type="entry name" value="BNATPEPTIDE"/>
</dbReference>
<dbReference type="PRINTS" id="PR00710">
    <property type="entry name" value="NATPEPTIDES"/>
</dbReference>
<dbReference type="SMART" id="SM00183">
    <property type="entry name" value="NAT_PEP"/>
    <property type="match status" value="1"/>
</dbReference>
<dbReference type="PROSITE" id="PS00263">
    <property type="entry name" value="NATRIURETIC_PEPTIDE"/>
    <property type="match status" value="1"/>
</dbReference>